<gene>
    <name evidence="1" type="primary">glnA</name>
</gene>
<evidence type="ECO:0000250" key="1">
    <source>
        <dbReference type="UniProtKB" id="P0A1P6"/>
    </source>
</evidence>
<evidence type="ECO:0000250" key="2">
    <source>
        <dbReference type="UniProtKB" id="P12425"/>
    </source>
</evidence>
<evidence type="ECO:0000250" key="3">
    <source>
        <dbReference type="UniProtKB" id="P77961"/>
    </source>
</evidence>
<evidence type="ECO:0000250" key="4">
    <source>
        <dbReference type="UniProtKB" id="P9WN39"/>
    </source>
</evidence>
<evidence type="ECO:0000250" key="5">
    <source>
        <dbReference type="UniProtKB" id="Q3V5W6"/>
    </source>
</evidence>
<evidence type="ECO:0000255" key="6">
    <source>
        <dbReference type="PROSITE-ProRule" id="PRU01330"/>
    </source>
</evidence>
<evidence type="ECO:0000255" key="7">
    <source>
        <dbReference type="PROSITE-ProRule" id="PRU01331"/>
    </source>
</evidence>
<evidence type="ECO:0000305" key="8"/>
<organism>
    <name type="scientific">Vibrio alginolyticus</name>
    <dbReference type="NCBI Taxonomy" id="663"/>
    <lineage>
        <taxon>Bacteria</taxon>
        <taxon>Pseudomonadati</taxon>
        <taxon>Pseudomonadota</taxon>
        <taxon>Gammaproteobacteria</taxon>
        <taxon>Vibrionales</taxon>
        <taxon>Vibrionaceae</taxon>
        <taxon>Vibrio</taxon>
    </lineage>
</organism>
<comment type="function">
    <text evidence="1">Catalyzes the ATP-dependent biosynthesis of glutamine from glutamate and ammonia.</text>
</comment>
<comment type="catalytic activity">
    <reaction evidence="1">
        <text>L-glutamate + NH4(+) + ATP = L-glutamine + ADP + phosphate + H(+)</text>
        <dbReference type="Rhea" id="RHEA:16169"/>
        <dbReference type="ChEBI" id="CHEBI:15378"/>
        <dbReference type="ChEBI" id="CHEBI:28938"/>
        <dbReference type="ChEBI" id="CHEBI:29985"/>
        <dbReference type="ChEBI" id="CHEBI:30616"/>
        <dbReference type="ChEBI" id="CHEBI:43474"/>
        <dbReference type="ChEBI" id="CHEBI:58359"/>
        <dbReference type="ChEBI" id="CHEBI:456216"/>
        <dbReference type="EC" id="6.3.1.2"/>
    </reaction>
</comment>
<comment type="cofactor">
    <cofactor evidence="4">
        <name>Mg(2+)</name>
        <dbReference type="ChEBI" id="CHEBI:18420"/>
    </cofactor>
    <text evidence="4">Binds 2 Mg(2+) ions per subunit.</text>
</comment>
<comment type="activity regulation">
    <text evidence="5">The activity of this enzyme could be controlled by adenylation under conditions of abundant glutamine.</text>
</comment>
<comment type="subunit">
    <text evidence="1">Oligomer of 12 subunits arranged in the form of two hexameric ring.</text>
</comment>
<comment type="subcellular location">
    <subcellularLocation>
        <location evidence="4">Cytoplasm</location>
    </subcellularLocation>
</comment>
<comment type="similarity">
    <text evidence="8">Belongs to the glutamine synthetase family.</text>
</comment>
<feature type="chain" id="PRO_0000153275" description="Glutamine synthetase">
    <location>
        <begin position="1"/>
        <end position="468"/>
    </location>
</feature>
<feature type="domain" description="GS beta-grasp" evidence="6">
    <location>
        <begin position="13"/>
        <end position="97"/>
    </location>
</feature>
<feature type="domain" description="GS catalytic" evidence="7">
    <location>
        <begin position="105"/>
        <end position="468"/>
    </location>
</feature>
<feature type="binding site" evidence="4">
    <location>
        <position position="130"/>
    </location>
    <ligand>
        <name>Mg(2+)</name>
        <dbReference type="ChEBI" id="CHEBI:18420"/>
        <label>1</label>
    </ligand>
</feature>
<feature type="binding site" evidence="4">
    <location>
        <position position="132"/>
    </location>
    <ligand>
        <name>Mg(2+)</name>
        <dbReference type="ChEBI" id="CHEBI:18420"/>
        <label>2</label>
    </ligand>
</feature>
<feature type="binding site" evidence="1">
    <location>
        <position position="208"/>
    </location>
    <ligand>
        <name>ATP</name>
        <dbReference type="ChEBI" id="CHEBI:30616"/>
    </ligand>
</feature>
<feature type="binding site" evidence="4">
    <location>
        <position position="213"/>
    </location>
    <ligand>
        <name>Mg(2+)</name>
        <dbReference type="ChEBI" id="CHEBI:18420"/>
        <label>2</label>
    </ligand>
</feature>
<feature type="binding site" evidence="4">
    <location>
        <position position="220"/>
    </location>
    <ligand>
        <name>Mg(2+)</name>
        <dbReference type="ChEBI" id="CHEBI:18420"/>
        <label>2</label>
    </ligand>
</feature>
<feature type="binding site" evidence="1">
    <location>
        <begin position="264"/>
        <end position="265"/>
    </location>
    <ligand>
        <name>L-glutamate</name>
        <dbReference type="ChEBI" id="CHEBI:29985"/>
    </ligand>
</feature>
<feature type="binding site" evidence="2">
    <location>
        <position position="265"/>
    </location>
    <ligand>
        <name>L-glutamate</name>
        <dbReference type="ChEBI" id="CHEBI:29985"/>
    </ligand>
</feature>
<feature type="binding site" evidence="4">
    <location>
        <position position="269"/>
    </location>
    <ligand>
        <name>Mg(2+)</name>
        <dbReference type="ChEBI" id="CHEBI:18420"/>
        <label>1</label>
    </ligand>
</feature>
<feature type="binding site" evidence="1">
    <location>
        <begin position="271"/>
        <end position="273"/>
    </location>
    <ligand>
        <name>ATP</name>
        <dbReference type="ChEBI" id="CHEBI:30616"/>
    </ligand>
</feature>
<feature type="binding site" evidence="3">
    <location>
        <position position="273"/>
    </location>
    <ligand>
        <name>ATP</name>
        <dbReference type="ChEBI" id="CHEBI:30616"/>
    </ligand>
</feature>
<feature type="binding site" evidence="1">
    <location>
        <position position="321"/>
    </location>
    <ligand>
        <name>L-glutamate</name>
        <dbReference type="ChEBI" id="CHEBI:29985"/>
    </ligand>
</feature>
<feature type="binding site" evidence="1">
    <location>
        <position position="327"/>
    </location>
    <ligand>
        <name>L-glutamate</name>
        <dbReference type="ChEBI" id="CHEBI:29985"/>
    </ligand>
</feature>
<feature type="binding site" evidence="4">
    <location>
        <position position="339"/>
    </location>
    <ligand>
        <name>ATP</name>
        <dbReference type="ChEBI" id="CHEBI:30616"/>
    </ligand>
</feature>
<feature type="binding site" evidence="4">
    <location>
        <position position="339"/>
    </location>
    <ligand>
        <name>L-glutamate</name>
        <dbReference type="ChEBI" id="CHEBI:29985"/>
    </ligand>
</feature>
<feature type="binding site" evidence="4">
    <location>
        <position position="344"/>
    </location>
    <ligand>
        <name>ATP</name>
        <dbReference type="ChEBI" id="CHEBI:30616"/>
    </ligand>
</feature>
<feature type="binding site" evidence="3">
    <location>
        <position position="352"/>
    </location>
    <ligand>
        <name>ATP</name>
        <dbReference type="ChEBI" id="CHEBI:30616"/>
    </ligand>
</feature>
<feature type="binding site" evidence="4">
    <location>
        <position position="357"/>
    </location>
    <ligand>
        <name>Mg(2+)</name>
        <dbReference type="ChEBI" id="CHEBI:18420"/>
        <label>1</label>
    </ligand>
</feature>
<feature type="binding site" evidence="1">
    <location>
        <position position="359"/>
    </location>
    <ligand>
        <name>L-glutamate</name>
        <dbReference type="ChEBI" id="CHEBI:29985"/>
    </ligand>
</feature>
<feature type="modified residue" description="O-AMP-tyrosine" evidence="4">
    <location>
        <position position="397"/>
    </location>
</feature>
<name>GLN1B_VIBAL</name>
<keyword id="KW-0067">ATP-binding</keyword>
<keyword id="KW-0963">Cytoplasm</keyword>
<keyword id="KW-0436">Ligase</keyword>
<keyword id="KW-0460">Magnesium</keyword>
<keyword id="KW-0479">Metal-binding</keyword>
<keyword id="KW-0547">Nucleotide-binding</keyword>
<keyword id="KW-0597">Phosphoprotein</keyword>
<reference key="1">
    <citation type="journal article" date="1989" name="Arch. Microbiol.">
        <title>Nucleotide sequence of the Vibrio alginolyticus glnA region.</title>
        <authorList>
            <person name="Maharaj R."/>
            <person name="Rumbak E."/>
            <person name="Jones W.A."/>
            <person name="Robb S.M."/>
            <person name="Robb F.T."/>
            <person name="Woods D.R."/>
        </authorList>
    </citation>
    <scope>NUCLEOTIDE SEQUENCE [GENOMIC DNA]</scope>
</reference>
<accession>P19904</accession>
<dbReference type="EC" id="6.3.1.2" evidence="1"/>
<dbReference type="EMBL" id="L08499">
    <property type="protein sequence ID" value="AAA27523.1"/>
    <property type="molecule type" value="Genomic_DNA"/>
</dbReference>
<dbReference type="PIR" id="JL0113">
    <property type="entry name" value="AJVCQA"/>
</dbReference>
<dbReference type="SMR" id="P19904"/>
<dbReference type="STRING" id="663.BAU10_15730"/>
<dbReference type="eggNOG" id="COG0174">
    <property type="taxonomic scope" value="Bacteria"/>
</dbReference>
<dbReference type="GO" id="GO:0005737">
    <property type="term" value="C:cytoplasm"/>
    <property type="evidence" value="ECO:0007669"/>
    <property type="project" value="UniProtKB-SubCell"/>
</dbReference>
<dbReference type="GO" id="GO:0016020">
    <property type="term" value="C:membrane"/>
    <property type="evidence" value="ECO:0007669"/>
    <property type="project" value="TreeGrafter"/>
</dbReference>
<dbReference type="GO" id="GO:0005524">
    <property type="term" value="F:ATP binding"/>
    <property type="evidence" value="ECO:0007669"/>
    <property type="project" value="UniProtKB-KW"/>
</dbReference>
<dbReference type="GO" id="GO:0004356">
    <property type="term" value="F:glutamine synthetase activity"/>
    <property type="evidence" value="ECO:0007669"/>
    <property type="project" value="UniProtKB-EC"/>
</dbReference>
<dbReference type="GO" id="GO:0046872">
    <property type="term" value="F:metal ion binding"/>
    <property type="evidence" value="ECO:0007669"/>
    <property type="project" value="UniProtKB-KW"/>
</dbReference>
<dbReference type="GO" id="GO:0006542">
    <property type="term" value="P:glutamine biosynthetic process"/>
    <property type="evidence" value="ECO:0007669"/>
    <property type="project" value="InterPro"/>
</dbReference>
<dbReference type="GO" id="GO:0019740">
    <property type="term" value="P:nitrogen utilization"/>
    <property type="evidence" value="ECO:0007669"/>
    <property type="project" value="TreeGrafter"/>
</dbReference>
<dbReference type="FunFam" id="3.10.20.70:FF:000001">
    <property type="entry name" value="Glutamine synthetase"/>
    <property type="match status" value="1"/>
</dbReference>
<dbReference type="FunFam" id="3.30.590.10:FF:000001">
    <property type="entry name" value="Glutamine synthetase"/>
    <property type="match status" value="1"/>
</dbReference>
<dbReference type="Gene3D" id="3.10.20.70">
    <property type="entry name" value="Glutamine synthetase, N-terminal domain"/>
    <property type="match status" value="1"/>
</dbReference>
<dbReference type="Gene3D" id="3.30.590.10">
    <property type="entry name" value="Glutamine synthetase/guanido kinase, catalytic domain"/>
    <property type="match status" value="1"/>
</dbReference>
<dbReference type="InterPro" id="IPR008147">
    <property type="entry name" value="Gln_synt_N"/>
</dbReference>
<dbReference type="InterPro" id="IPR036651">
    <property type="entry name" value="Gln_synt_N_sf"/>
</dbReference>
<dbReference type="InterPro" id="IPR014746">
    <property type="entry name" value="Gln_synth/guanido_kin_cat_dom"/>
</dbReference>
<dbReference type="InterPro" id="IPR008146">
    <property type="entry name" value="Gln_synth_cat_dom"/>
</dbReference>
<dbReference type="InterPro" id="IPR027303">
    <property type="entry name" value="Gln_synth_gly_rich_site"/>
</dbReference>
<dbReference type="InterPro" id="IPR004809">
    <property type="entry name" value="Gln_synth_I"/>
</dbReference>
<dbReference type="InterPro" id="IPR001637">
    <property type="entry name" value="Gln_synth_I_adenylation_site"/>
</dbReference>
<dbReference type="InterPro" id="IPR027302">
    <property type="entry name" value="Gln_synth_N_conserv_site"/>
</dbReference>
<dbReference type="NCBIfam" id="TIGR00653">
    <property type="entry name" value="GlnA"/>
    <property type="match status" value="1"/>
</dbReference>
<dbReference type="NCBIfam" id="NF007006">
    <property type="entry name" value="PRK09469.1"/>
    <property type="match status" value="1"/>
</dbReference>
<dbReference type="PANTHER" id="PTHR43407">
    <property type="entry name" value="GLUTAMINE SYNTHETASE"/>
    <property type="match status" value="1"/>
</dbReference>
<dbReference type="PANTHER" id="PTHR43407:SF2">
    <property type="entry name" value="GLUTAMINE SYNTHETASE"/>
    <property type="match status" value="1"/>
</dbReference>
<dbReference type="Pfam" id="PF00120">
    <property type="entry name" value="Gln-synt_C"/>
    <property type="match status" value="1"/>
</dbReference>
<dbReference type="Pfam" id="PF03951">
    <property type="entry name" value="Gln-synt_N"/>
    <property type="match status" value="1"/>
</dbReference>
<dbReference type="SMART" id="SM01230">
    <property type="entry name" value="Gln-synt_C"/>
    <property type="match status" value="1"/>
</dbReference>
<dbReference type="SUPFAM" id="SSF54368">
    <property type="entry name" value="Glutamine synthetase, N-terminal domain"/>
    <property type="match status" value="1"/>
</dbReference>
<dbReference type="SUPFAM" id="SSF55931">
    <property type="entry name" value="Glutamine synthetase/guanido kinase"/>
    <property type="match status" value="1"/>
</dbReference>
<dbReference type="PROSITE" id="PS00180">
    <property type="entry name" value="GLNA_1"/>
    <property type="match status" value="1"/>
</dbReference>
<dbReference type="PROSITE" id="PS00182">
    <property type="entry name" value="GLNA_ADENYLATION"/>
    <property type="match status" value="1"/>
</dbReference>
<dbReference type="PROSITE" id="PS00181">
    <property type="entry name" value="GLNA_ATP"/>
    <property type="match status" value="1"/>
</dbReference>
<dbReference type="PROSITE" id="PS51986">
    <property type="entry name" value="GS_BETA_GRASP"/>
    <property type="match status" value="1"/>
</dbReference>
<dbReference type="PROSITE" id="PS51987">
    <property type="entry name" value="GS_CATALYTIC"/>
    <property type="match status" value="1"/>
</dbReference>
<protein>
    <recommendedName>
        <fullName evidence="1">Glutamine synthetase</fullName>
        <shortName evidence="1">GS</shortName>
        <ecNumber evidence="1">6.3.1.2</ecNumber>
    </recommendedName>
    <alternativeName>
        <fullName evidence="8">Glutamate--ammonia ligase</fullName>
    </alternativeName>
    <alternativeName>
        <fullName evidence="1">Glutamine synthetase I beta</fullName>
        <shortName evidence="1">GSI beta</shortName>
    </alternativeName>
</protein>
<sequence>MSVEKVLSLIQENEVKFVDLRFTDTKGKEQHISIPAHQIDADFFEEGKMFDGSSVAGWKGINESDMVMMPDASSAVLDPFTEDATLNIRCDILEPATMQGYDRDPRSIAKRAEDFMRSTGVADTVLIGPEPEFFLFDDVKFATDMSGSFFKIDDVEAAWNTGSDYEEGNKGHRPGVKGGYFPVAPVDSSQDIRSAMCLVMEEMGLVVEAHHHEATAGQNEIATRFNTLTTKADEIQIYKYVVHNVAHAFGKTATFMPKPLVGDNGSGMHVHQSLAKDGVNLFAGDKYGGLSEMALYYIGGIIKHARAINAFANPSTNSYKRLVPGFEAPVMLAYSARNRSASIRIPVVPSPKARRIEVRFGDPAANPYLCFASMLMAGLDGIKNKIHPGEAMDKDLYDLPAEESAEIPTVAYSLKDALAELDADREFLTAGGVFSDDFIDSYIELKSQDVERVNMTTHPVEFELYYSV</sequence>
<proteinExistence type="inferred from homology"/>